<name>OGG1_ARCFU</name>
<keyword id="KW-0227">DNA damage</keyword>
<keyword id="KW-0234">DNA repair</keyword>
<keyword id="KW-0326">Glycosidase</keyword>
<keyword id="KW-0378">Hydrolase</keyword>
<keyword id="KW-0456">Lyase</keyword>
<keyword id="KW-0511">Multifunctional enzyme</keyword>
<keyword id="KW-1185">Reference proteome</keyword>
<protein>
    <recommendedName>
        <fullName evidence="1 4">8-oxoguanine DNA glycosylase/AP lyase</fullName>
    </recommendedName>
    <domain>
        <recommendedName>
            <fullName evidence="1 3">8-oxoguanine DNA glycosylase</fullName>
            <shortName evidence="1 3">8-oxoG DNA glycosylase</shortName>
            <ecNumber evidence="1 2">3.2.2.-</ecNumber>
        </recommendedName>
    </domain>
    <domain>
        <recommendedName>
            <fullName evidence="1">DNA-(apurinic or apyrimidinic site) lyase</fullName>
            <shortName evidence="1 3">AP lyase</shortName>
            <ecNumber evidence="1 2">4.2.99.18</ecNumber>
        </recommendedName>
    </domain>
</protein>
<gene>
    <name evidence="1" type="primary">ogg</name>
    <name type="ordered locus">AF_0371</name>
</gene>
<sequence length="198" mass="22639">MIEKAISRRIKEFRQLGEKGEVEFDFRPFLDFSVKATIRTELAFCISTANSSATAGLKFQRLLGQGVGVKEALTLAGVRFHNRKAEYIREAFKSFKLVEKALEAESSKAREILLKIKGLGMKEASHFLRNVGREDVAIIDRHILRWLERQGYEVPGTMTAKKYLEVEKILMEISEERGESLAEMDLRIWAEMTGKVLK</sequence>
<feature type="chain" id="PRO_0000159563" description="8-oxoguanine DNA glycosylase/AP lyase">
    <location>
        <begin position="1"/>
        <end position="198"/>
    </location>
</feature>
<feature type="active site" evidence="1">
    <location>
        <position position="122"/>
    </location>
</feature>
<feature type="active site" evidence="1">
    <location>
        <position position="140"/>
    </location>
</feature>
<feature type="site" description="Important for guanine/8-oxoguanine distinction" evidence="1">
    <location>
        <position position="198"/>
    </location>
</feature>
<organism>
    <name type="scientific">Archaeoglobus fulgidus (strain ATCC 49558 / DSM 4304 / JCM 9628 / NBRC 100126 / VC-16)</name>
    <dbReference type="NCBI Taxonomy" id="224325"/>
    <lineage>
        <taxon>Archaea</taxon>
        <taxon>Methanobacteriati</taxon>
        <taxon>Methanobacteriota</taxon>
        <taxon>Archaeoglobi</taxon>
        <taxon>Archaeoglobales</taxon>
        <taxon>Archaeoglobaceae</taxon>
        <taxon>Archaeoglobus</taxon>
    </lineage>
</organism>
<accession>O29876</accession>
<dbReference type="EC" id="3.2.2.-" evidence="1 2"/>
<dbReference type="EC" id="4.2.99.18" evidence="1 2"/>
<dbReference type="EMBL" id="AE000782">
    <property type="protein sequence ID" value="AAB90876.1"/>
    <property type="molecule type" value="Genomic_DNA"/>
</dbReference>
<dbReference type="PIR" id="C69296">
    <property type="entry name" value="C69296"/>
</dbReference>
<dbReference type="RefSeq" id="WP_010877878.1">
    <property type="nucleotide sequence ID" value="NC_000917.1"/>
</dbReference>
<dbReference type="SMR" id="O29876"/>
<dbReference type="STRING" id="224325.AF_0371"/>
<dbReference type="PaxDb" id="224325-AF_0371"/>
<dbReference type="EnsemblBacteria" id="AAB90876">
    <property type="protein sequence ID" value="AAB90876"/>
    <property type="gene ID" value="AF_0371"/>
</dbReference>
<dbReference type="KEGG" id="afu:AF_0371"/>
<dbReference type="eggNOG" id="arCOG04357">
    <property type="taxonomic scope" value="Archaea"/>
</dbReference>
<dbReference type="HOGENOM" id="CLU_104937_0_0_2"/>
<dbReference type="OrthoDB" id="35941at2157"/>
<dbReference type="PhylomeDB" id="O29876"/>
<dbReference type="BRENDA" id="3.2.2.B5">
    <property type="organism ID" value="414"/>
</dbReference>
<dbReference type="BRENDA" id="4.2.99.18">
    <property type="organism ID" value="414"/>
</dbReference>
<dbReference type="Proteomes" id="UP000002199">
    <property type="component" value="Chromosome"/>
</dbReference>
<dbReference type="GO" id="GO:0140078">
    <property type="term" value="F:class I DNA-(apurinic or apyrimidinic site) endonuclease activity"/>
    <property type="evidence" value="ECO:0007669"/>
    <property type="project" value="UniProtKB-EC"/>
</dbReference>
<dbReference type="GO" id="GO:0016799">
    <property type="term" value="F:hydrolase activity, hydrolyzing N-glycosyl compounds"/>
    <property type="evidence" value="ECO:0007669"/>
    <property type="project" value="UniProtKB-UniRule"/>
</dbReference>
<dbReference type="GO" id="GO:0006284">
    <property type="term" value="P:base-excision repair"/>
    <property type="evidence" value="ECO:0007669"/>
    <property type="project" value="UniProtKB-UniRule"/>
</dbReference>
<dbReference type="CDD" id="cd00056">
    <property type="entry name" value="ENDO3c"/>
    <property type="match status" value="1"/>
</dbReference>
<dbReference type="Gene3D" id="1.10.1670.10">
    <property type="entry name" value="Helix-hairpin-Helix base-excision DNA repair enzymes (C-terminal)"/>
    <property type="match status" value="1"/>
</dbReference>
<dbReference type="Gene3D" id="1.10.340.30">
    <property type="entry name" value="Hypothetical protein, domain 2"/>
    <property type="match status" value="1"/>
</dbReference>
<dbReference type="HAMAP" id="MF_00241">
    <property type="entry name" value="Ogg"/>
    <property type="match status" value="1"/>
</dbReference>
<dbReference type="InterPro" id="IPR012092">
    <property type="entry name" value="DNA_glyclase/AP_lyase_Ogg"/>
</dbReference>
<dbReference type="InterPro" id="IPR011257">
    <property type="entry name" value="DNA_glycosylase"/>
</dbReference>
<dbReference type="InterPro" id="IPR003265">
    <property type="entry name" value="HhH-GPD_domain"/>
</dbReference>
<dbReference type="InterPro" id="IPR023170">
    <property type="entry name" value="HhH_base_excis_C"/>
</dbReference>
<dbReference type="NCBIfam" id="NF002305">
    <property type="entry name" value="PRK01229.1"/>
    <property type="match status" value="1"/>
</dbReference>
<dbReference type="Pfam" id="PF22175">
    <property type="entry name" value="Ogg-HhH"/>
    <property type="match status" value="1"/>
</dbReference>
<dbReference type="PIRSF" id="PIRSF005954">
    <property type="entry name" value="Thrmst_ogg"/>
    <property type="match status" value="1"/>
</dbReference>
<dbReference type="SMART" id="SM00478">
    <property type="entry name" value="ENDO3c"/>
    <property type="match status" value="1"/>
</dbReference>
<dbReference type="SUPFAM" id="SSF48150">
    <property type="entry name" value="DNA-glycosylase"/>
    <property type="match status" value="1"/>
</dbReference>
<comment type="function">
    <text evidence="2">Catalyzes the excision of an oxidatively damaged form of guanine (7,8-dihydro-8-oxoguanine = 8-oxoG) from DNA. Also cleaves the DNA backbone at apurinic/apyrimidinic sites (AP sites). Efficiently cleaves oligomers containing 8-oxoG:C and 8-oxoG:G base pairs, and is less effective on oligomers containing 8-oxoG:T and 8-oxoG:A mispairs.</text>
</comment>
<comment type="catalytic activity">
    <reaction evidence="1 2">
        <text>2'-deoxyribonucleotide-(2'-deoxyribose 5'-phosphate)-2'-deoxyribonucleotide-DNA = a 3'-end 2'-deoxyribonucleotide-(2,3-dehydro-2,3-deoxyribose 5'-phosphate)-DNA + a 5'-end 5'-phospho-2'-deoxyribonucleoside-DNA + H(+)</text>
        <dbReference type="Rhea" id="RHEA:66592"/>
        <dbReference type="Rhea" id="RHEA-COMP:13180"/>
        <dbReference type="Rhea" id="RHEA-COMP:16897"/>
        <dbReference type="Rhea" id="RHEA-COMP:17067"/>
        <dbReference type="ChEBI" id="CHEBI:15378"/>
        <dbReference type="ChEBI" id="CHEBI:136412"/>
        <dbReference type="ChEBI" id="CHEBI:157695"/>
        <dbReference type="ChEBI" id="CHEBI:167181"/>
        <dbReference type="EC" id="4.2.99.18"/>
    </reaction>
</comment>
<comment type="biophysicochemical properties">
    <phDependence>
        <text evidence="2">Optimum pH is 8.5.</text>
    </phDependence>
    <temperatureDependence>
        <text evidence="2">Optimum temperature is 60 degrees Celsius.</text>
    </temperatureDependence>
</comment>
<comment type="subunit">
    <text evidence="2">Monomer.</text>
</comment>
<comment type="similarity">
    <text evidence="1">Belongs to the type-2 OGG1 family.</text>
</comment>
<evidence type="ECO:0000255" key="1">
    <source>
        <dbReference type="HAMAP-Rule" id="MF_00241"/>
    </source>
</evidence>
<evidence type="ECO:0000269" key="2">
    <source>
    </source>
</evidence>
<evidence type="ECO:0000303" key="3">
    <source>
    </source>
</evidence>
<evidence type="ECO:0000305" key="4"/>
<reference key="1">
    <citation type="journal article" date="1997" name="Nature">
        <title>The complete genome sequence of the hyperthermophilic, sulphate-reducing archaeon Archaeoglobus fulgidus.</title>
        <authorList>
            <person name="Klenk H.-P."/>
            <person name="Clayton R.A."/>
            <person name="Tomb J.-F."/>
            <person name="White O."/>
            <person name="Nelson K.E."/>
            <person name="Ketchum K.A."/>
            <person name="Dodson R.J."/>
            <person name="Gwinn M.L."/>
            <person name="Hickey E.K."/>
            <person name="Peterson J.D."/>
            <person name="Richardson D.L."/>
            <person name="Kerlavage A.R."/>
            <person name="Graham D.E."/>
            <person name="Kyrpides N.C."/>
            <person name="Fleischmann R.D."/>
            <person name="Quackenbush J."/>
            <person name="Lee N.H."/>
            <person name="Sutton G.G."/>
            <person name="Gill S.R."/>
            <person name="Kirkness E.F."/>
            <person name="Dougherty B.A."/>
            <person name="McKenney K."/>
            <person name="Adams M.D."/>
            <person name="Loftus B.J."/>
            <person name="Peterson S.N."/>
            <person name="Reich C.I."/>
            <person name="McNeil L.K."/>
            <person name="Badger J.H."/>
            <person name="Glodek A."/>
            <person name="Zhou L."/>
            <person name="Overbeek R."/>
            <person name="Gocayne J.D."/>
            <person name="Weidman J.F."/>
            <person name="McDonald L.A."/>
            <person name="Utterback T.R."/>
            <person name="Cotton M.D."/>
            <person name="Spriggs T."/>
            <person name="Artiach P."/>
            <person name="Kaine B.P."/>
            <person name="Sykes S.M."/>
            <person name="Sadow P.W."/>
            <person name="D'Andrea K.P."/>
            <person name="Bowman C."/>
            <person name="Fujii C."/>
            <person name="Garland S.A."/>
            <person name="Mason T.M."/>
            <person name="Olsen G.J."/>
            <person name="Fraser C.M."/>
            <person name="Smith H.O."/>
            <person name="Woese C.R."/>
            <person name="Venter J.C."/>
        </authorList>
    </citation>
    <scope>NUCLEOTIDE SEQUENCE [LARGE SCALE GENOMIC DNA]</scope>
    <source>
        <strain>ATCC 49558 / DSM 4304 / JCM 9628 / NBRC 100126 / VC-16</strain>
    </source>
</reference>
<reference key="2">
    <citation type="journal article" date="2001" name="Mutat. Res.">
        <title>Repair activities of 8-oxoguanine DNA glycosylase from Archaeoglobus fulgidus, a hyperthermophilic archaeon.</title>
        <authorList>
            <person name="Chung J.H."/>
            <person name="Suh M.J."/>
            <person name="Park Y.I."/>
            <person name="Tainer J.A."/>
            <person name="Han Y.S."/>
        </authorList>
    </citation>
    <scope>FUNCTION</scope>
    <scope>CATALYTIC ACTIVITY</scope>
    <scope>BIOPHYSICOCHEMICAL PROPERTIES</scope>
    <scope>SUBUNIT</scope>
</reference>
<proteinExistence type="evidence at protein level"/>